<evidence type="ECO:0000255" key="1">
    <source>
        <dbReference type="HAMAP-Rule" id="MF_01395"/>
    </source>
</evidence>
<evidence type="ECO:0000255" key="2">
    <source>
        <dbReference type="PROSITE-ProRule" id="PRU01136"/>
    </source>
</evidence>
<reference key="1">
    <citation type="journal article" date="2006" name="Genome Biol.">
        <title>Genomic analysis reveals that Pseudomonas aeruginosa virulence is combinatorial.</title>
        <authorList>
            <person name="Lee D.G."/>
            <person name="Urbach J.M."/>
            <person name="Wu G."/>
            <person name="Liberati N.T."/>
            <person name="Feinbaum R.L."/>
            <person name="Miyata S."/>
            <person name="Diggins L.T."/>
            <person name="He J."/>
            <person name="Saucier M."/>
            <person name="Deziel E."/>
            <person name="Friedman L."/>
            <person name="Li L."/>
            <person name="Grills G."/>
            <person name="Montgomery K."/>
            <person name="Kucherlapati R."/>
            <person name="Rahme L.G."/>
            <person name="Ausubel F.M."/>
        </authorList>
    </citation>
    <scope>NUCLEOTIDE SEQUENCE [LARGE SCALE GENOMIC DNA]</scope>
    <source>
        <strain>UCBPP-PA14</strain>
    </source>
</reference>
<sequence>MSNWLVDKLIPSIMRSESQKSSVPEGLWHKCPSCEAVLYRPELEKTLDVCPKCDHHMRINARTRLDIFLDEDGREELGADLEPVDRLKFRDSKKYKDRLAAAQKDTGEKDALIAMSGKLQGMPVVACAFEFSFMGGSMGAIVGERFVRAANVALEKRCPLICFSASGGARMQEALISLMQMAKTSAVLARLREEGIPFVSVLTDPVYGGVSASLAMLGDVIVGEPKALIGFAGPRVIEQTVREKLPEGFQRSEFLLEHGAIDMIVHRAELRPRLANLLSAFTHSPSPVSA</sequence>
<accession>Q02PS5</accession>
<keyword id="KW-0067">ATP-binding</keyword>
<keyword id="KW-0963">Cytoplasm</keyword>
<keyword id="KW-0275">Fatty acid biosynthesis</keyword>
<keyword id="KW-0276">Fatty acid metabolism</keyword>
<keyword id="KW-0444">Lipid biosynthesis</keyword>
<keyword id="KW-0443">Lipid metabolism</keyword>
<keyword id="KW-0479">Metal-binding</keyword>
<keyword id="KW-0547">Nucleotide-binding</keyword>
<keyword id="KW-0808">Transferase</keyword>
<keyword id="KW-0862">Zinc</keyword>
<keyword id="KW-0863">Zinc-finger</keyword>
<feature type="chain" id="PRO_0000359035" description="Acetyl-coenzyme A carboxylase carboxyl transferase subunit beta">
    <location>
        <begin position="1"/>
        <end position="290"/>
    </location>
</feature>
<feature type="domain" description="CoA carboxyltransferase N-terminal" evidence="2">
    <location>
        <begin position="27"/>
        <end position="290"/>
    </location>
</feature>
<feature type="zinc finger region" description="C4-type" evidence="1">
    <location>
        <begin position="31"/>
        <end position="53"/>
    </location>
</feature>
<feature type="binding site" evidence="1">
    <location>
        <position position="31"/>
    </location>
    <ligand>
        <name>Zn(2+)</name>
        <dbReference type="ChEBI" id="CHEBI:29105"/>
    </ligand>
</feature>
<feature type="binding site" evidence="1">
    <location>
        <position position="34"/>
    </location>
    <ligand>
        <name>Zn(2+)</name>
        <dbReference type="ChEBI" id="CHEBI:29105"/>
    </ligand>
</feature>
<feature type="binding site" evidence="1">
    <location>
        <position position="50"/>
    </location>
    <ligand>
        <name>Zn(2+)</name>
        <dbReference type="ChEBI" id="CHEBI:29105"/>
    </ligand>
</feature>
<feature type="binding site" evidence="1">
    <location>
        <position position="53"/>
    </location>
    <ligand>
        <name>Zn(2+)</name>
        <dbReference type="ChEBI" id="CHEBI:29105"/>
    </ligand>
</feature>
<organism>
    <name type="scientific">Pseudomonas aeruginosa (strain UCBPP-PA14)</name>
    <dbReference type="NCBI Taxonomy" id="208963"/>
    <lineage>
        <taxon>Bacteria</taxon>
        <taxon>Pseudomonadati</taxon>
        <taxon>Pseudomonadota</taxon>
        <taxon>Gammaproteobacteria</taxon>
        <taxon>Pseudomonadales</taxon>
        <taxon>Pseudomonadaceae</taxon>
        <taxon>Pseudomonas</taxon>
    </lineage>
</organism>
<gene>
    <name evidence="1" type="primary">accD</name>
    <name type="ordered locus">PA14_23860</name>
</gene>
<dbReference type="EC" id="2.1.3.15" evidence="1"/>
<dbReference type="EMBL" id="CP000438">
    <property type="protein sequence ID" value="ABJ12344.1"/>
    <property type="molecule type" value="Genomic_DNA"/>
</dbReference>
<dbReference type="RefSeq" id="WP_003104199.1">
    <property type="nucleotide sequence ID" value="NZ_CP034244.1"/>
</dbReference>
<dbReference type="SMR" id="Q02PS5"/>
<dbReference type="KEGG" id="pau:PA14_23860"/>
<dbReference type="PseudoCAP" id="PA14_23860"/>
<dbReference type="HOGENOM" id="CLU_015486_1_0_6"/>
<dbReference type="BioCyc" id="PAER208963:G1G74-1990-MONOMER"/>
<dbReference type="UniPathway" id="UPA00655">
    <property type="reaction ID" value="UER00711"/>
</dbReference>
<dbReference type="Proteomes" id="UP000000653">
    <property type="component" value="Chromosome"/>
</dbReference>
<dbReference type="GO" id="GO:0009329">
    <property type="term" value="C:acetate CoA-transferase complex"/>
    <property type="evidence" value="ECO:0007669"/>
    <property type="project" value="TreeGrafter"/>
</dbReference>
<dbReference type="GO" id="GO:0003989">
    <property type="term" value="F:acetyl-CoA carboxylase activity"/>
    <property type="evidence" value="ECO:0007669"/>
    <property type="project" value="InterPro"/>
</dbReference>
<dbReference type="GO" id="GO:0005524">
    <property type="term" value="F:ATP binding"/>
    <property type="evidence" value="ECO:0007669"/>
    <property type="project" value="UniProtKB-KW"/>
</dbReference>
<dbReference type="GO" id="GO:0016743">
    <property type="term" value="F:carboxyl- or carbamoyltransferase activity"/>
    <property type="evidence" value="ECO:0007669"/>
    <property type="project" value="UniProtKB-UniRule"/>
</dbReference>
<dbReference type="GO" id="GO:0008270">
    <property type="term" value="F:zinc ion binding"/>
    <property type="evidence" value="ECO:0007669"/>
    <property type="project" value="UniProtKB-UniRule"/>
</dbReference>
<dbReference type="GO" id="GO:0006633">
    <property type="term" value="P:fatty acid biosynthetic process"/>
    <property type="evidence" value="ECO:0007669"/>
    <property type="project" value="UniProtKB-KW"/>
</dbReference>
<dbReference type="GO" id="GO:2001295">
    <property type="term" value="P:malonyl-CoA biosynthetic process"/>
    <property type="evidence" value="ECO:0007669"/>
    <property type="project" value="UniProtKB-UniRule"/>
</dbReference>
<dbReference type="Gene3D" id="3.90.226.10">
    <property type="entry name" value="2-enoyl-CoA Hydratase, Chain A, domain 1"/>
    <property type="match status" value="1"/>
</dbReference>
<dbReference type="HAMAP" id="MF_01395">
    <property type="entry name" value="AcetylCoA_CT_beta"/>
    <property type="match status" value="1"/>
</dbReference>
<dbReference type="InterPro" id="IPR034733">
    <property type="entry name" value="AcCoA_carboxyl_beta"/>
</dbReference>
<dbReference type="InterPro" id="IPR000438">
    <property type="entry name" value="Acetyl_CoA_COase_Trfase_b_su"/>
</dbReference>
<dbReference type="InterPro" id="IPR029045">
    <property type="entry name" value="ClpP/crotonase-like_dom_sf"/>
</dbReference>
<dbReference type="InterPro" id="IPR011762">
    <property type="entry name" value="COA_CT_N"/>
</dbReference>
<dbReference type="InterPro" id="IPR041010">
    <property type="entry name" value="Znf-ACC"/>
</dbReference>
<dbReference type="NCBIfam" id="TIGR00515">
    <property type="entry name" value="accD"/>
    <property type="match status" value="1"/>
</dbReference>
<dbReference type="PANTHER" id="PTHR42995">
    <property type="entry name" value="ACETYL-COENZYME A CARBOXYLASE CARBOXYL TRANSFERASE SUBUNIT BETA, CHLOROPLASTIC"/>
    <property type="match status" value="1"/>
</dbReference>
<dbReference type="PANTHER" id="PTHR42995:SF5">
    <property type="entry name" value="ACETYL-COENZYME A CARBOXYLASE CARBOXYL TRANSFERASE SUBUNIT BETA, CHLOROPLASTIC"/>
    <property type="match status" value="1"/>
</dbReference>
<dbReference type="Pfam" id="PF01039">
    <property type="entry name" value="Carboxyl_trans"/>
    <property type="match status" value="1"/>
</dbReference>
<dbReference type="Pfam" id="PF17848">
    <property type="entry name" value="Zn_ribbon_ACC"/>
    <property type="match status" value="1"/>
</dbReference>
<dbReference type="PRINTS" id="PR01070">
    <property type="entry name" value="ACCCTRFRASEB"/>
</dbReference>
<dbReference type="SUPFAM" id="SSF52096">
    <property type="entry name" value="ClpP/crotonase"/>
    <property type="match status" value="1"/>
</dbReference>
<dbReference type="PROSITE" id="PS50980">
    <property type="entry name" value="COA_CT_NTER"/>
    <property type="match status" value="1"/>
</dbReference>
<proteinExistence type="inferred from homology"/>
<protein>
    <recommendedName>
        <fullName evidence="1">Acetyl-coenzyme A carboxylase carboxyl transferase subunit beta</fullName>
        <shortName evidence="1">ACCase subunit beta</shortName>
        <shortName evidence="1">Acetyl-CoA carboxylase carboxyltransferase subunit beta</shortName>
        <ecNumber evidence="1">2.1.3.15</ecNumber>
    </recommendedName>
</protein>
<comment type="function">
    <text evidence="1">Component of the acetyl coenzyme A carboxylase (ACC) complex. Biotin carboxylase (BC) catalyzes the carboxylation of biotin on its carrier protein (BCCP) and then the CO(2) group is transferred by the transcarboxylase to acetyl-CoA to form malonyl-CoA.</text>
</comment>
<comment type="catalytic activity">
    <reaction evidence="1">
        <text>N(6)-carboxybiotinyl-L-lysyl-[protein] + acetyl-CoA = N(6)-biotinyl-L-lysyl-[protein] + malonyl-CoA</text>
        <dbReference type="Rhea" id="RHEA:54728"/>
        <dbReference type="Rhea" id="RHEA-COMP:10505"/>
        <dbReference type="Rhea" id="RHEA-COMP:10506"/>
        <dbReference type="ChEBI" id="CHEBI:57288"/>
        <dbReference type="ChEBI" id="CHEBI:57384"/>
        <dbReference type="ChEBI" id="CHEBI:83144"/>
        <dbReference type="ChEBI" id="CHEBI:83145"/>
        <dbReference type="EC" id="2.1.3.15"/>
    </reaction>
</comment>
<comment type="cofactor">
    <cofactor evidence="1">
        <name>Zn(2+)</name>
        <dbReference type="ChEBI" id="CHEBI:29105"/>
    </cofactor>
    <text evidence="1">Binds 1 zinc ion per subunit.</text>
</comment>
<comment type="pathway">
    <text evidence="1">Lipid metabolism; malonyl-CoA biosynthesis; malonyl-CoA from acetyl-CoA: step 1/1.</text>
</comment>
<comment type="subunit">
    <text evidence="1">Acetyl-CoA carboxylase is a heterohexamer composed of biotin carboxyl carrier protein (AccB), biotin carboxylase (AccC) and two subunits each of ACCase subunit alpha (AccA) and ACCase subunit beta (AccD).</text>
</comment>
<comment type="subcellular location">
    <subcellularLocation>
        <location evidence="1">Cytoplasm</location>
    </subcellularLocation>
</comment>
<comment type="similarity">
    <text evidence="1">Belongs to the AccD/PCCB family.</text>
</comment>
<name>ACCD_PSEAB</name>